<gene>
    <name evidence="1" type="primary">RBCS</name>
</gene>
<feature type="transit peptide" description="Chloroplast" evidence="1">
    <location>
        <begin position="1"/>
        <end position="54"/>
    </location>
</feature>
<feature type="chain" id="PRO_0000031505" description="Ribulose bisphosphate carboxylase small subunit, chloroplastic" evidence="1">
    <location>
        <begin position="55"/>
        <end position="178"/>
    </location>
</feature>
<reference key="1">
    <citation type="submission" date="1995-12" db="EMBL/GenBank/DDBJ databases">
        <authorList>
            <person name="Cao K."/>
            <person name="Ji J."/>
            <person name="Gu Q."/>
        </authorList>
    </citation>
    <scope>NUCLEOTIDE SEQUENCE [GENOMIC DNA]</scope>
    <source>
        <strain>PW0066</strain>
        <tissue>Leaf</tissue>
    </source>
</reference>
<evidence type="ECO:0000255" key="1">
    <source>
        <dbReference type="HAMAP-Rule" id="MF_00860"/>
    </source>
</evidence>
<keyword id="KW-0113">Calvin cycle</keyword>
<keyword id="KW-0120">Carbon dioxide fixation</keyword>
<keyword id="KW-0150">Chloroplast</keyword>
<keyword id="KW-0601">Photorespiration</keyword>
<keyword id="KW-0602">Photosynthesis</keyword>
<keyword id="KW-0934">Plastid</keyword>
<keyword id="KW-0809">Transit peptide</keyword>
<sequence>MASSMISSPAVTTVNRAGAGTVAPFTGLKSMAGFPTRKTNNDIASIASNGGRVQCMQVWPTTGKKKFETLSYLPDLDDAQLAKEVEYLLRKGWIPCLEFELEHGFVYRENHRSPGYYDGRYWTMWKLPVFGCTDASQVLKELQEAKTAYPNGFIRIIGFDNVRQVQCISFIAYKPPSF</sequence>
<dbReference type="EMBL" id="U39857">
    <property type="protein sequence ID" value="AAA82070.1"/>
    <property type="molecule type" value="Genomic_DNA"/>
</dbReference>
<dbReference type="SMR" id="Q42822"/>
<dbReference type="GO" id="GO:0009507">
    <property type="term" value="C:chloroplast"/>
    <property type="evidence" value="ECO:0007669"/>
    <property type="project" value="UniProtKB-SubCell"/>
</dbReference>
<dbReference type="GO" id="GO:0016984">
    <property type="term" value="F:ribulose-bisphosphate carboxylase activity"/>
    <property type="evidence" value="ECO:0007669"/>
    <property type="project" value="UniProtKB-UniRule"/>
</dbReference>
<dbReference type="GO" id="GO:0009853">
    <property type="term" value="P:photorespiration"/>
    <property type="evidence" value="ECO:0007669"/>
    <property type="project" value="UniProtKB-KW"/>
</dbReference>
<dbReference type="GO" id="GO:0019253">
    <property type="term" value="P:reductive pentose-phosphate cycle"/>
    <property type="evidence" value="ECO:0007669"/>
    <property type="project" value="UniProtKB-UniRule"/>
</dbReference>
<dbReference type="CDD" id="cd03527">
    <property type="entry name" value="RuBisCO_small"/>
    <property type="match status" value="1"/>
</dbReference>
<dbReference type="FunFam" id="3.30.190.10:FF:000001">
    <property type="entry name" value="Ribulose bisphosphate carboxylase small chain, chloroplastic"/>
    <property type="match status" value="1"/>
</dbReference>
<dbReference type="Gene3D" id="3.30.190.10">
    <property type="entry name" value="Ribulose bisphosphate carboxylase, small subunit"/>
    <property type="match status" value="1"/>
</dbReference>
<dbReference type="HAMAP" id="MF_00859">
    <property type="entry name" value="RuBisCO_S_bact"/>
    <property type="match status" value="1"/>
</dbReference>
<dbReference type="InterPro" id="IPR024681">
    <property type="entry name" value="RuBisCO_ssu"/>
</dbReference>
<dbReference type="InterPro" id="IPR000894">
    <property type="entry name" value="RuBisCO_ssu_dom"/>
</dbReference>
<dbReference type="InterPro" id="IPR024680">
    <property type="entry name" value="RuBisCO_ssu_N"/>
</dbReference>
<dbReference type="InterPro" id="IPR036385">
    <property type="entry name" value="RuBisCO_ssu_sf"/>
</dbReference>
<dbReference type="PANTHER" id="PTHR31262">
    <property type="entry name" value="RIBULOSE BISPHOSPHATE CARBOXYLASE SMALL CHAIN 1, CHLOROPLASTIC"/>
    <property type="match status" value="1"/>
</dbReference>
<dbReference type="PANTHER" id="PTHR31262:SF19">
    <property type="entry name" value="RIBULOSE BISPHOSPHATE CARBOXYLASE SMALL SUBUNIT, CHLOROPLASTIC 2"/>
    <property type="match status" value="1"/>
</dbReference>
<dbReference type="Pfam" id="PF12338">
    <property type="entry name" value="RbcS"/>
    <property type="match status" value="1"/>
</dbReference>
<dbReference type="Pfam" id="PF00101">
    <property type="entry name" value="RuBisCO_small"/>
    <property type="match status" value="1"/>
</dbReference>
<dbReference type="PRINTS" id="PR00152">
    <property type="entry name" value="RUBISCOSMALL"/>
</dbReference>
<dbReference type="SMART" id="SM00961">
    <property type="entry name" value="RuBisCO_small"/>
    <property type="match status" value="1"/>
</dbReference>
<dbReference type="SUPFAM" id="SSF55239">
    <property type="entry name" value="RuBisCO, small subunit"/>
    <property type="match status" value="1"/>
</dbReference>
<name>RBS_GLYTO</name>
<protein>
    <recommendedName>
        <fullName evidence="1">Ribulose bisphosphate carboxylase small subunit, chloroplastic</fullName>
        <shortName evidence="1">RuBisCO small subunit</shortName>
    </recommendedName>
</protein>
<organism>
    <name type="scientific">Glycine tomentella</name>
    <name type="common">Woolly glycine</name>
    <name type="synonym">Glycine tomentosa</name>
    <dbReference type="NCBI Taxonomy" id="44015"/>
    <lineage>
        <taxon>Eukaryota</taxon>
        <taxon>Viridiplantae</taxon>
        <taxon>Streptophyta</taxon>
        <taxon>Embryophyta</taxon>
        <taxon>Tracheophyta</taxon>
        <taxon>Spermatophyta</taxon>
        <taxon>Magnoliopsida</taxon>
        <taxon>eudicotyledons</taxon>
        <taxon>Gunneridae</taxon>
        <taxon>Pentapetalae</taxon>
        <taxon>rosids</taxon>
        <taxon>fabids</taxon>
        <taxon>Fabales</taxon>
        <taxon>Fabaceae</taxon>
        <taxon>Papilionoideae</taxon>
        <taxon>50 kb inversion clade</taxon>
        <taxon>NPAAA clade</taxon>
        <taxon>indigoferoid/millettioid clade</taxon>
        <taxon>Phaseoleae</taxon>
        <taxon>Glycine</taxon>
        <taxon>Glycine subgen. Glycine</taxon>
    </lineage>
</organism>
<proteinExistence type="inferred from homology"/>
<comment type="function">
    <text evidence="1">RuBisCO catalyzes two reactions: the carboxylation of D-ribulose 1,5-bisphosphate, the primary event in carbon dioxide fixation, as well as the oxidative fragmentation of the pentose substrate. Both reactions occur simultaneously and in competition at the same active site. Although the small subunit is not catalytic it is essential for maximal activity.</text>
</comment>
<comment type="subunit">
    <text evidence="1">Heterohexadecamer of 8 large and 8 small subunits.</text>
</comment>
<comment type="subcellular location">
    <subcellularLocation>
        <location evidence="1">Plastid</location>
        <location evidence="1">Chloroplast</location>
    </subcellularLocation>
</comment>
<comment type="miscellaneous">
    <text evidence="1">The basic functional RuBisCO is composed of a large chain homodimer in a 'head-to-tail' conformation. In form I RuBisCO this homodimer is arranged in a barrel-like tetramer with the small subunits forming a tetrameric 'cap' on each end of the 'barrel'.</text>
</comment>
<comment type="similarity">
    <text evidence="1">Belongs to the RuBisCO small chain family.</text>
</comment>
<accession>Q42822</accession>